<comment type="function">
    <text>Destroys radicals which are normally produced within the cells and which are toxic to biological systems.</text>
</comment>
<comment type="catalytic activity">
    <reaction>
        <text>2 superoxide + 2 H(+) = H2O2 + O2</text>
        <dbReference type="Rhea" id="RHEA:20696"/>
        <dbReference type="ChEBI" id="CHEBI:15378"/>
        <dbReference type="ChEBI" id="CHEBI:15379"/>
        <dbReference type="ChEBI" id="CHEBI:16240"/>
        <dbReference type="ChEBI" id="CHEBI:18421"/>
        <dbReference type="EC" id="1.15.1.1"/>
    </reaction>
</comment>
<comment type="cofactor">
    <cofactor>
        <name>Cu cation</name>
        <dbReference type="ChEBI" id="CHEBI:23378"/>
    </cofactor>
    <text>Binds 1 copper ion per subunit.</text>
</comment>
<comment type="cofactor">
    <cofactor>
        <name>Zn(2+)</name>
        <dbReference type="ChEBI" id="CHEBI:29105"/>
    </cofactor>
    <text>Binds 1 zinc ion per subunit.</text>
</comment>
<comment type="subunit">
    <text>Homodimer.</text>
</comment>
<comment type="subcellular location">
    <subcellularLocation>
        <location>Cytoplasm</location>
    </subcellularLocation>
    <subcellularLocation>
        <location evidence="1">Nucleus</location>
    </subcellularLocation>
</comment>
<comment type="similarity">
    <text evidence="3">Belongs to the Cu-Zn superoxide dismutase family.</text>
</comment>
<reference key="1">
    <citation type="journal article" date="1984" name="Eur. J. Biochem.">
        <title>The amino-acid sequence of copper/zinc superoxide dismutase from swordfish liver. Comparison of copper/zinc superoxide dismutase sequences.</title>
        <authorList>
            <person name="Rocha H.A."/>
            <person name="Bannister W.H."/>
            <person name="Bannister J.V."/>
        </authorList>
    </citation>
    <scope>PROTEIN SEQUENCE OF 2-152</scope>
</reference>
<keyword id="KW-0049">Antioxidant</keyword>
<keyword id="KW-0186">Copper</keyword>
<keyword id="KW-0963">Cytoplasm</keyword>
<keyword id="KW-0903">Direct protein sequencing</keyword>
<keyword id="KW-1015">Disulfide bond</keyword>
<keyword id="KW-0449">Lipoprotein</keyword>
<keyword id="KW-0479">Metal-binding</keyword>
<keyword id="KW-0539">Nucleus</keyword>
<keyword id="KW-0560">Oxidoreductase</keyword>
<keyword id="KW-0564">Palmitate</keyword>
<keyword id="KW-0862">Zinc</keyword>
<protein>
    <recommendedName>
        <fullName>Superoxide dismutase [Cu-Zn]</fullName>
        <ecNumber>1.15.1.1</ecNumber>
    </recommendedName>
</protein>
<sequence>MVLKAVCVLRGAGETTGTVYFEQEGNANAVGKGIILKGLTPGEHGFHVHGFGDNTNGCISAGPHFNPASKKHAGPKDEDRHVGDLGNVTADANGVAKIDITDKISLTGPYSIIGRTMVIHEKADDLGRGGNEESLKTGNAGSRLACGVIGTE</sequence>
<evidence type="ECO:0000250" key="1"/>
<evidence type="ECO:0000269" key="2">
    <source>
    </source>
</evidence>
<evidence type="ECO:0000305" key="3"/>
<name>SODC_XIPGL</name>
<dbReference type="EC" id="1.15.1.1"/>
<dbReference type="PIR" id="A00516">
    <property type="entry name" value="DSWFCZ"/>
</dbReference>
<dbReference type="SMR" id="P03946"/>
<dbReference type="GO" id="GO:0005737">
    <property type="term" value="C:cytoplasm"/>
    <property type="evidence" value="ECO:0007669"/>
    <property type="project" value="UniProtKB-SubCell"/>
</dbReference>
<dbReference type="GO" id="GO:0005634">
    <property type="term" value="C:nucleus"/>
    <property type="evidence" value="ECO:0007669"/>
    <property type="project" value="UniProtKB-SubCell"/>
</dbReference>
<dbReference type="GO" id="GO:0005507">
    <property type="term" value="F:copper ion binding"/>
    <property type="evidence" value="ECO:0007669"/>
    <property type="project" value="InterPro"/>
</dbReference>
<dbReference type="GO" id="GO:0004784">
    <property type="term" value="F:superoxide dismutase activity"/>
    <property type="evidence" value="ECO:0007669"/>
    <property type="project" value="UniProtKB-EC"/>
</dbReference>
<dbReference type="CDD" id="cd00305">
    <property type="entry name" value="Cu-Zn_Superoxide_Dismutase"/>
    <property type="match status" value="1"/>
</dbReference>
<dbReference type="FunFam" id="2.60.40.200:FF:000001">
    <property type="entry name" value="Superoxide dismutase [Cu-Zn]"/>
    <property type="match status" value="1"/>
</dbReference>
<dbReference type="Gene3D" id="2.60.40.200">
    <property type="entry name" value="Superoxide dismutase, copper/zinc binding domain"/>
    <property type="match status" value="1"/>
</dbReference>
<dbReference type="InterPro" id="IPR036423">
    <property type="entry name" value="SOD-like_Cu/Zn_dom_sf"/>
</dbReference>
<dbReference type="InterPro" id="IPR024134">
    <property type="entry name" value="SOD_Cu/Zn_/chaperone"/>
</dbReference>
<dbReference type="InterPro" id="IPR018152">
    <property type="entry name" value="SOD_Cu/Zn_BS"/>
</dbReference>
<dbReference type="InterPro" id="IPR001424">
    <property type="entry name" value="SOD_Cu_Zn_dom"/>
</dbReference>
<dbReference type="PANTHER" id="PTHR10003">
    <property type="entry name" value="SUPEROXIDE DISMUTASE CU-ZN -RELATED"/>
    <property type="match status" value="1"/>
</dbReference>
<dbReference type="Pfam" id="PF00080">
    <property type="entry name" value="Sod_Cu"/>
    <property type="match status" value="1"/>
</dbReference>
<dbReference type="PRINTS" id="PR00068">
    <property type="entry name" value="CUZNDISMTASE"/>
</dbReference>
<dbReference type="SUPFAM" id="SSF49329">
    <property type="entry name" value="Cu,Zn superoxide dismutase-like"/>
    <property type="match status" value="1"/>
</dbReference>
<dbReference type="PROSITE" id="PS00087">
    <property type="entry name" value="SOD_CU_ZN_1"/>
    <property type="match status" value="1"/>
</dbReference>
<dbReference type="PROSITE" id="PS00332">
    <property type="entry name" value="SOD_CU_ZN_2"/>
    <property type="match status" value="1"/>
</dbReference>
<organism>
    <name type="scientific">Xiphias gladius</name>
    <name type="common">Swordfish</name>
    <name type="synonym">Tetrapterus imperator</name>
    <dbReference type="NCBI Taxonomy" id="8245"/>
    <lineage>
        <taxon>Eukaryota</taxon>
        <taxon>Metazoa</taxon>
        <taxon>Chordata</taxon>
        <taxon>Craniata</taxon>
        <taxon>Vertebrata</taxon>
        <taxon>Euteleostomi</taxon>
        <taxon>Actinopterygii</taxon>
        <taxon>Neopterygii</taxon>
        <taxon>Teleostei</taxon>
        <taxon>Neoteleostei</taxon>
        <taxon>Acanthomorphata</taxon>
        <taxon>Carangaria</taxon>
        <taxon>Istiophoriformes</taxon>
        <taxon>Xiphiidae</taxon>
        <taxon>Xiphias</taxon>
    </lineage>
</organism>
<proteinExistence type="evidence at protein level"/>
<gene>
    <name type="primary">sod1</name>
</gene>
<accession>P03946</accession>
<feature type="initiator methionine" description="Removed" evidence="2">
    <location>
        <position position="1"/>
    </location>
</feature>
<feature type="chain" id="PRO_0000164078" description="Superoxide dismutase [Cu-Zn]">
    <location>
        <begin position="2"/>
        <end position="152"/>
    </location>
</feature>
<feature type="binding site">
    <location>
        <position position="47"/>
    </location>
    <ligand>
        <name>Cu cation</name>
        <dbReference type="ChEBI" id="CHEBI:23378"/>
        <note>catalytic</note>
    </ligand>
</feature>
<feature type="binding site">
    <location>
        <position position="49"/>
    </location>
    <ligand>
        <name>Cu cation</name>
        <dbReference type="ChEBI" id="CHEBI:23378"/>
        <note>catalytic</note>
    </ligand>
</feature>
<feature type="binding site">
    <location>
        <position position="64"/>
    </location>
    <ligand>
        <name>Cu cation</name>
        <dbReference type="ChEBI" id="CHEBI:23378"/>
        <note>catalytic</note>
    </ligand>
</feature>
<feature type="binding site">
    <location>
        <position position="64"/>
    </location>
    <ligand>
        <name>Zn(2+)</name>
        <dbReference type="ChEBI" id="CHEBI:29105"/>
        <note>structural</note>
    </ligand>
</feature>
<feature type="binding site">
    <location>
        <position position="72"/>
    </location>
    <ligand>
        <name>Zn(2+)</name>
        <dbReference type="ChEBI" id="CHEBI:29105"/>
        <note>structural</note>
    </ligand>
</feature>
<feature type="binding site">
    <location>
        <position position="81"/>
    </location>
    <ligand>
        <name>Zn(2+)</name>
        <dbReference type="ChEBI" id="CHEBI:29105"/>
        <note>structural</note>
    </ligand>
</feature>
<feature type="binding site">
    <location>
        <position position="84"/>
    </location>
    <ligand>
        <name>Zn(2+)</name>
        <dbReference type="ChEBI" id="CHEBI:29105"/>
        <note>structural</note>
    </ligand>
</feature>
<feature type="binding site">
    <location>
        <position position="120"/>
    </location>
    <ligand>
        <name>Cu cation</name>
        <dbReference type="ChEBI" id="CHEBI:23378"/>
        <note>catalytic</note>
    </ligand>
</feature>
<feature type="lipid moiety-binding region" description="S-palmitoyl cysteine" evidence="1">
    <location>
        <position position="7"/>
    </location>
</feature>
<feature type="disulfide bond">
    <location>
        <begin position="58"/>
        <end position="146"/>
    </location>
</feature>